<reference evidence="6" key="1">
    <citation type="journal article" date="2011" name="J. Proteomics">
        <title>Biomolecular characterization of allergenic proteins in snow crab (Chionoecetes opilio) and de novo sequencing of the second allergen arginine kinase using tandem mass spectrometry.</title>
        <authorList>
            <person name="Abdel Rahman A.M."/>
            <person name="Kamath S.D."/>
            <person name="Lopata A.L."/>
            <person name="Robinson J.J."/>
            <person name="Helleur R.J."/>
        </authorList>
    </citation>
    <scope>PROTEIN SEQUENCE</scope>
    <scope>ALLERGEN</scope>
    <source>
        <tissue evidence="4">Muscle</tissue>
    </source>
</reference>
<proteinExistence type="evidence at protein level"/>
<name>ACT_CHIOP</name>
<protein>
    <recommendedName>
        <fullName evidence="1">Actin, muscle</fullName>
        <ecNumber evidence="2">3.6.4.-</ecNumber>
    </recommendedName>
    <alternativeName>
        <fullName evidence="5">Alpha-actin</fullName>
    </alternativeName>
</protein>
<feature type="chain" id="PRO_0000410431" description="Actin, muscle">
    <location>
        <begin position="1" status="less than"/>
        <end position="192" status="greater than"/>
    </location>
</feature>
<feature type="non-consecutive residues" evidence="5">
    <location>
        <begin position="21"/>
        <end position="22"/>
    </location>
</feature>
<feature type="non-consecutive residues" evidence="5">
    <location>
        <begin position="39"/>
        <end position="40"/>
    </location>
</feature>
<feature type="non-consecutive residues" evidence="5">
    <location>
        <begin position="57"/>
        <end position="58"/>
    </location>
</feature>
<feature type="non-consecutive residues" evidence="5">
    <location>
        <begin position="100"/>
        <end position="101"/>
    </location>
</feature>
<feature type="non-consecutive residues" evidence="5">
    <location>
        <begin position="114"/>
        <end position="115"/>
    </location>
</feature>
<feature type="non-consecutive residues" evidence="5">
    <location>
        <begin position="130"/>
        <end position="131"/>
    </location>
</feature>
<feature type="non-consecutive residues" evidence="5">
    <location>
        <begin position="158"/>
        <end position="159"/>
    </location>
</feature>
<feature type="non-consecutive residues" evidence="5">
    <location>
        <begin position="179"/>
        <end position="180"/>
    </location>
</feature>
<feature type="non-terminal residue" evidence="5">
    <location>
        <position position="1"/>
    </location>
</feature>
<feature type="non-terminal residue" evidence="5">
    <location>
        <position position="192"/>
    </location>
</feature>
<sequence length="192" mass="20803">AGFAGDDAPRAVFPSIVGRPRDAYVGDEAQSKRGILTLKIAPEESPVLLTEAPLNPKTGIVLDTGDGVTHTVPIYEGYCLPHAILRLDLAGRDLTAYLTKGYSFTTTAEREIVRSYELPDGQVITIGNERCDIDIRKDLFANNVLSGGTTMYPGIADREITALAPPTIKIKIIAPPERKEEYDESGPGIVHR</sequence>
<dbReference type="EC" id="3.6.4.-" evidence="2"/>
<dbReference type="GO" id="GO:0005737">
    <property type="term" value="C:cytoplasm"/>
    <property type="evidence" value="ECO:0007669"/>
    <property type="project" value="UniProtKB-KW"/>
</dbReference>
<dbReference type="GO" id="GO:0005856">
    <property type="term" value="C:cytoskeleton"/>
    <property type="evidence" value="ECO:0007669"/>
    <property type="project" value="UniProtKB-SubCell"/>
</dbReference>
<dbReference type="GO" id="GO:0005524">
    <property type="term" value="F:ATP binding"/>
    <property type="evidence" value="ECO:0007669"/>
    <property type="project" value="UniProtKB-KW"/>
</dbReference>
<dbReference type="GO" id="GO:0016787">
    <property type="term" value="F:hydrolase activity"/>
    <property type="evidence" value="ECO:0007669"/>
    <property type="project" value="UniProtKB-KW"/>
</dbReference>
<dbReference type="Gene3D" id="3.30.420.40">
    <property type="match status" value="3"/>
</dbReference>
<dbReference type="InterPro" id="IPR004000">
    <property type="entry name" value="Actin"/>
</dbReference>
<dbReference type="InterPro" id="IPR004001">
    <property type="entry name" value="Actin_CS"/>
</dbReference>
<dbReference type="InterPro" id="IPR043129">
    <property type="entry name" value="ATPase_NBD"/>
</dbReference>
<dbReference type="PANTHER" id="PTHR11937">
    <property type="entry name" value="ACTIN"/>
    <property type="match status" value="1"/>
</dbReference>
<dbReference type="Pfam" id="PF00022">
    <property type="entry name" value="Actin"/>
    <property type="match status" value="2"/>
</dbReference>
<dbReference type="SMART" id="SM00268">
    <property type="entry name" value="ACTIN"/>
    <property type="match status" value="1"/>
</dbReference>
<dbReference type="SUPFAM" id="SSF53067">
    <property type="entry name" value="Actin-like ATPase domain"/>
    <property type="match status" value="2"/>
</dbReference>
<dbReference type="PROSITE" id="PS00406">
    <property type="entry name" value="ACTINS_1"/>
    <property type="match status" value="1"/>
</dbReference>
<evidence type="ECO:0000250" key="1">
    <source>
        <dbReference type="UniProtKB" id="P49871"/>
    </source>
</evidence>
<evidence type="ECO:0000250" key="2">
    <source>
        <dbReference type="UniProtKB" id="P68137"/>
    </source>
</evidence>
<evidence type="ECO:0000255" key="3"/>
<evidence type="ECO:0000269" key="4">
    <source>
    </source>
</evidence>
<evidence type="ECO:0000303" key="5">
    <source>
    </source>
</evidence>
<evidence type="ECO:0000305" key="6"/>
<organism>
    <name type="scientific">Chionoecetes opilio</name>
    <name type="common">Atlantic snow crab</name>
    <name type="synonym">Cancer opilio</name>
    <dbReference type="NCBI Taxonomy" id="41210"/>
    <lineage>
        <taxon>Eukaryota</taxon>
        <taxon>Metazoa</taxon>
        <taxon>Ecdysozoa</taxon>
        <taxon>Arthropoda</taxon>
        <taxon>Crustacea</taxon>
        <taxon>Multicrustacea</taxon>
        <taxon>Malacostraca</taxon>
        <taxon>Eumalacostraca</taxon>
        <taxon>Eucarida</taxon>
        <taxon>Decapoda</taxon>
        <taxon>Pleocyemata</taxon>
        <taxon>Brachyura</taxon>
        <taxon>Eubrachyura</taxon>
        <taxon>Majoidea</taxon>
        <taxon>Majidae</taxon>
        <taxon>Chionoecetes</taxon>
    </lineage>
</organism>
<comment type="function">
    <text evidence="6">Actins are highly conserved proteins that are involved in various types of cell motility and are ubiquitously expressed in all eukaryotic cells.</text>
</comment>
<comment type="catalytic activity">
    <reaction evidence="2">
        <text>ATP + H2O = ADP + phosphate + H(+)</text>
        <dbReference type="Rhea" id="RHEA:13065"/>
        <dbReference type="ChEBI" id="CHEBI:15377"/>
        <dbReference type="ChEBI" id="CHEBI:15378"/>
        <dbReference type="ChEBI" id="CHEBI:30616"/>
        <dbReference type="ChEBI" id="CHEBI:43474"/>
        <dbReference type="ChEBI" id="CHEBI:456216"/>
    </reaction>
</comment>
<comment type="subcellular location">
    <subcellularLocation>
        <location evidence="6">Cytoplasm</location>
        <location evidence="6">Cytoskeleton</location>
    </subcellularLocation>
</comment>
<comment type="allergen">
    <text evidence="4">Causes an allergic reaction in human. Binds to IgE.</text>
</comment>
<comment type="similarity">
    <text evidence="3">Belongs to the actin family.</text>
</comment>
<keyword id="KW-0020">Allergen</keyword>
<keyword id="KW-0067">ATP-binding</keyword>
<keyword id="KW-0963">Cytoplasm</keyword>
<keyword id="KW-0206">Cytoskeleton</keyword>
<keyword id="KW-0903">Direct protein sequencing</keyword>
<keyword id="KW-0378">Hydrolase</keyword>
<keyword id="KW-0547">Nucleotide-binding</keyword>
<accession>P86700</accession>